<accession>Q5GAB0</accession>
<feature type="chain" id="PRO_0000143563" description="Maturase K">
    <location>
        <begin position="1"/>
        <end position="509"/>
    </location>
</feature>
<proteinExistence type="inferred from homology"/>
<comment type="function">
    <text evidence="1">Usually encoded in the trnK tRNA gene intron. Probably assists in splicing its own and other chloroplast group II introns.</text>
</comment>
<comment type="subcellular location">
    <subcellularLocation>
        <location>Plastid</location>
        <location>Chloroplast</location>
    </subcellularLocation>
</comment>
<comment type="similarity">
    <text evidence="1">Belongs to the intron maturase 2 family. MatK subfamily.</text>
</comment>
<protein>
    <recommendedName>
        <fullName evidence="1">Maturase K</fullName>
    </recommendedName>
    <alternativeName>
        <fullName evidence="1">Intron maturase</fullName>
    </alternativeName>
</protein>
<sequence length="509" mass="60246">MEEIQRYFQLERSHQHDFLYPLIFQEYIYTFAHDRGCNRSILSENPCYENKSSLLIVKRLITRMCQQNHFLISSNDFNQNPFWGRNKNFDFQIISEGFALIVEIPFSLRLRASLEEKKIVTFQNLRSIQAIFPFLEDSFSHLNFVLDISIPHSIHLEILVQTLRYWVKDASSLHLLRFFLNEYCNSNSLITPKKVSSSFSKRNQRFFLFLYNSHVCEYESIFVFLRKQSSHLRSTSSGLLLERIYFYAKMERLVNLFVKVKDFQVNLWLVKEPCMHYVRYQRKSILASKGVSLLINKWKSYLVAFWQWHFSMWFHPRRISINQLSNHSLEFLGYLSSVRMNPSVVRSQILENSFLINNALKKFDTLVPINPLIASLAKAKFCNVLGHPISKPVWADFSDLNIIDRFGHISRNISHYYSGSSXKNSLYRIKYILRLSCARTLARKHKSTVRVFLKRLGSELLEEFLMSEEDVLSLTFPKASSTFWGVYRSRIWYLDIISINDLANHKSKF</sequence>
<gene>
    <name evidence="1" type="primary">matK</name>
</gene>
<dbReference type="EMBL" id="AY667459">
    <property type="protein sequence ID" value="AAW57925.1"/>
    <property type="molecule type" value="Genomic_DNA"/>
</dbReference>
<dbReference type="GO" id="GO:0009507">
    <property type="term" value="C:chloroplast"/>
    <property type="evidence" value="ECO:0007669"/>
    <property type="project" value="UniProtKB-SubCell"/>
</dbReference>
<dbReference type="GO" id="GO:0003723">
    <property type="term" value="F:RNA binding"/>
    <property type="evidence" value="ECO:0007669"/>
    <property type="project" value="UniProtKB-KW"/>
</dbReference>
<dbReference type="GO" id="GO:0006397">
    <property type="term" value="P:mRNA processing"/>
    <property type="evidence" value="ECO:0007669"/>
    <property type="project" value="UniProtKB-KW"/>
</dbReference>
<dbReference type="GO" id="GO:0008380">
    <property type="term" value="P:RNA splicing"/>
    <property type="evidence" value="ECO:0007669"/>
    <property type="project" value="UniProtKB-UniRule"/>
</dbReference>
<dbReference type="GO" id="GO:0008033">
    <property type="term" value="P:tRNA processing"/>
    <property type="evidence" value="ECO:0007669"/>
    <property type="project" value="UniProtKB-KW"/>
</dbReference>
<dbReference type="HAMAP" id="MF_01390">
    <property type="entry name" value="MatK"/>
    <property type="match status" value="1"/>
</dbReference>
<dbReference type="InterPro" id="IPR024937">
    <property type="entry name" value="Domain_X"/>
</dbReference>
<dbReference type="InterPro" id="IPR002866">
    <property type="entry name" value="Maturase_MatK"/>
</dbReference>
<dbReference type="InterPro" id="IPR024942">
    <property type="entry name" value="Maturase_MatK_N"/>
</dbReference>
<dbReference type="PANTHER" id="PTHR34811">
    <property type="entry name" value="MATURASE K"/>
    <property type="match status" value="1"/>
</dbReference>
<dbReference type="PANTHER" id="PTHR34811:SF1">
    <property type="entry name" value="MATURASE K"/>
    <property type="match status" value="1"/>
</dbReference>
<dbReference type="Pfam" id="PF01348">
    <property type="entry name" value="Intron_maturas2"/>
    <property type="match status" value="1"/>
</dbReference>
<dbReference type="Pfam" id="PF01824">
    <property type="entry name" value="MatK_N"/>
    <property type="match status" value="1"/>
</dbReference>
<geneLocation type="chloroplast"/>
<evidence type="ECO:0000255" key="1">
    <source>
        <dbReference type="HAMAP-Rule" id="MF_01390"/>
    </source>
</evidence>
<name>MATK_OTAAZ</name>
<keyword id="KW-0150">Chloroplast</keyword>
<keyword id="KW-0507">mRNA processing</keyword>
<keyword id="KW-0934">Plastid</keyword>
<keyword id="KW-0694">RNA-binding</keyword>
<keyword id="KW-0819">tRNA processing</keyword>
<reference key="1">
    <citation type="journal article" date="2005" name="Plant Biol.">
        <title>The Linderniaceae and Gratiolaceae are further lineages distinct from the Scrophulariaceae (Lamiales).</title>
        <authorList>
            <person name="Ramanzadeh R."/>
            <person name="Mueller K.F."/>
            <person name="Fischer E."/>
            <person name="Bartels D."/>
            <person name="Borsch T."/>
        </authorList>
    </citation>
    <scope>NUCLEOTIDE SEQUENCE [GENOMIC DNA]</scope>
</reference>
<organism>
    <name type="scientific">Otacanthus azureus</name>
    <name type="common">Brazilian snapdragon</name>
    <name type="synonym">Otacanthus caeruleus</name>
    <dbReference type="NCBI Taxonomy" id="303132"/>
    <lineage>
        <taxon>Eukaryota</taxon>
        <taxon>Viridiplantae</taxon>
        <taxon>Streptophyta</taxon>
        <taxon>Embryophyta</taxon>
        <taxon>Tracheophyta</taxon>
        <taxon>Spermatophyta</taxon>
        <taxon>Magnoliopsida</taxon>
        <taxon>eudicotyledons</taxon>
        <taxon>Gunneridae</taxon>
        <taxon>Pentapetalae</taxon>
        <taxon>asterids</taxon>
        <taxon>lamiids</taxon>
        <taxon>Lamiales</taxon>
        <taxon>Plantaginaceae</taxon>
        <taxon>Gratioleae</taxon>
        <taxon>Otacanthus</taxon>
    </lineage>
</organism>